<evidence type="ECO:0000250" key="1"/>
<evidence type="ECO:0000255" key="2"/>
<evidence type="ECO:0000305" key="3"/>
<dbReference type="EMBL" id="BX571857">
    <property type="protein sequence ID" value="CAG41853.1"/>
    <property type="molecule type" value="Genomic_DNA"/>
</dbReference>
<dbReference type="RefSeq" id="WP_000876756.1">
    <property type="nucleotide sequence ID" value="NC_002953.3"/>
</dbReference>
<dbReference type="SMR" id="Q6GD13"/>
<dbReference type="KEGG" id="sas:SAS0086"/>
<dbReference type="HOGENOM" id="CLU_097164_0_0_9"/>
<dbReference type="GO" id="GO:0005737">
    <property type="term" value="C:cytoplasm"/>
    <property type="evidence" value="ECO:0007669"/>
    <property type="project" value="UniProtKB-SubCell"/>
</dbReference>
<dbReference type="GO" id="GO:0003677">
    <property type="term" value="F:DNA binding"/>
    <property type="evidence" value="ECO:0007669"/>
    <property type="project" value="UniProtKB-KW"/>
</dbReference>
<dbReference type="GO" id="GO:0003700">
    <property type="term" value="F:DNA-binding transcription factor activity"/>
    <property type="evidence" value="ECO:0007669"/>
    <property type="project" value="InterPro"/>
</dbReference>
<dbReference type="GO" id="GO:0006950">
    <property type="term" value="P:response to stress"/>
    <property type="evidence" value="ECO:0007669"/>
    <property type="project" value="TreeGrafter"/>
</dbReference>
<dbReference type="Gene3D" id="1.10.10.10">
    <property type="entry name" value="Winged helix-like DNA-binding domain superfamily/Winged helix DNA-binding domain"/>
    <property type="match status" value="2"/>
</dbReference>
<dbReference type="InterPro" id="IPR000835">
    <property type="entry name" value="HTH_MarR-typ"/>
</dbReference>
<dbReference type="InterPro" id="IPR039422">
    <property type="entry name" value="MarR/SlyA-like"/>
</dbReference>
<dbReference type="InterPro" id="IPR010166">
    <property type="entry name" value="SarA/Rot_dom"/>
</dbReference>
<dbReference type="InterPro" id="IPR055166">
    <property type="entry name" value="Transc_reg_Sar_Rot_HTH"/>
</dbReference>
<dbReference type="InterPro" id="IPR036388">
    <property type="entry name" value="WH-like_DNA-bd_sf"/>
</dbReference>
<dbReference type="InterPro" id="IPR036390">
    <property type="entry name" value="WH_DNA-bd_sf"/>
</dbReference>
<dbReference type="NCBIfam" id="TIGR01889">
    <property type="entry name" value="Staph_reg_Sar"/>
    <property type="match status" value="2"/>
</dbReference>
<dbReference type="PANTHER" id="PTHR33164:SF5">
    <property type="entry name" value="ORGANIC HYDROPEROXIDE RESISTANCE TRANSCRIPTIONAL REGULATOR"/>
    <property type="match status" value="1"/>
</dbReference>
<dbReference type="PANTHER" id="PTHR33164">
    <property type="entry name" value="TRANSCRIPTIONAL REGULATOR, MARR FAMILY"/>
    <property type="match status" value="1"/>
</dbReference>
<dbReference type="Pfam" id="PF22381">
    <property type="entry name" value="Staph_reg_Sar_Rot"/>
    <property type="match status" value="2"/>
</dbReference>
<dbReference type="SMART" id="SM00347">
    <property type="entry name" value="HTH_MARR"/>
    <property type="match status" value="2"/>
</dbReference>
<dbReference type="SUPFAM" id="SSF46785">
    <property type="entry name" value="Winged helix' DNA-binding domain"/>
    <property type="match status" value="2"/>
</dbReference>
<sequence length="250" mass="29890">MKYNNHDKIRDFIIIEAYMFRFKKKVKPEVDMTIKEFILLTYLFHQQENTLPFKKIVSDLCYKQSDLVQHIKVLVKHSYISKVRSKIDERNTYISISEEQREKIAERVTLFDQIIKQFNLADQSESQMIPKDSKEFLNLMMYTMYFKNIIKKHLTLSFVEFTILAIITSQNKNIVLLKDLIETIHHKYPQTVRALNNLKKQGYLIKERSTEDERKILIHMDDAQQDHAEQLLAQVNQLLADKDHLHLVFE</sequence>
<organism>
    <name type="scientific">Staphylococcus aureus (strain MSSA476)</name>
    <dbReference type="NCBI Taxonomy" id="282459"/>
    <lineage>
        <taxon>Bacteria</taxon>
        <taxon>Bacillati</taxon>
        <taxon>Bacillota</taxon>
        <taxon>Bacilli</taxon>
        <taxon>Bacillales</taxon>
        <taxon>Staphylococcaceae</taxon>
        <taxon>Staphylococcus</taxon>
    </lineage>
</organism>
<gene>
    <name type="primary">sarS</name>
    <name type="ordered locus">SAS0086</name>
</gene>
<proteinExistence type="inferred from homology"/>
<name>SARS_STAAS</name>
<reference key="1">
    <citation type="journal article" date="2004" name="Proc. Natl. Acad. Sci. U.S.A.">
        <title>Complete genomes of two clinical Staphylococcus aureus strains: evidence for the rapid evolution of virulence and drug resistance.</title>
        <authorList>
            <person name="Holden M.T.G."/>
            <person name="Feil E.J."/>
            <person name="Lindsay J.A."/>
            <person name="Peacock S.J."/>
            <person name="Day N.P.J."/>
            <person name="Enright M.C."/>
            <person name="Foster T.J."/>
            <person name="Moore C.E."/>
            <person name="Hurst L."/>
            <person name="Atkin R."/>
            <person name="Barron A."/>
            <person name="Bason N."/>
            <person name="Bentley S.D."/>
            <person name="Chillingworth C."/>
            <person name="Chillingworth T."/>
            <person name="Churcher C."/>
            <person name="Clark L."/>
            <person name="Corton C."/>
            <person name="Cronin A."/>
            <person name="Doggett J."/>
            <person name="Dowd L."/>
            <person name="Feltwell T."/>
            <person name="Hance Z."/>
            <person name="Harris B."/>
            <person name="Hauser H."/>
            <person name="Holroyd S."/>
            <person name="Jagels K."/>
            <person name="James K.D."/>
            <person name="Lennard N."/>
            <person name="Line A."/>
            <person name="Mayes R."/>
            <person name="Moule S."/>
            <person name="Mungall K."/>
            <person name="Ormond D."/>
            <person name="Quail M.A."/>
            <person name="Rabbinowitsch E."/>
            <person name="Rutherford K.M."/>
            <person name="Sanders M."/>
            <person name="Sharp S."/>
            <person name="Simmonds M."/>
            <person name="Stevens K."/>
            <person name="Whitehead S."/>
            <person name="Barrell B.G."/>
            <person name="Spratt B.G."/>
            <person name="Parkhill J."/>
        </authorList>
    </citation>
    <scope>NUCLEOTIDE SEQUENCE [LARGE SCALE GENOMIC DNA]</scope>
    <source>
        <strain>MSSA476</strain>
    </source>
</reference>
<feature type="chain" id="PRO_0000219595" description="HTH-type transcriptional regulator SarS">
    <location>
        <begin position="1"/>
        <end position="250"/>
    </location>
</feature>
<feature type="DNA-binding region" description="H-T-H motif" evidence="2">
    <location>
        <begin position="53"/>
        <end position="76"/>
    </location>
</feature>
<feature type="DNA-binding region" description="H-T-H motif" evidence="2">
    <location>
        <begin position="177"/>
        <end position="200"/>
    </location>
</feature>
<protein>
    <recommendedName>
        <fullName>HTH-type transcriptional regulator SarS</fullName>
    </recommendedName>
    <alternativeName>
        <fullName>Staphylococcal accessory regulator S</fullName>
    </alternativeName>
</protein>
<accession>Q6GD13</accession>
<keyword id="KW-0010">Activator</keyword>
<keyword id="KW-0963">Cytoplasm</keyword>
<keyword id="KW-0238">DNA-binding</keyword>
<keyword id="KW-0677">Repeat</keyword>
<keyword id="KW-0678">Repressor</keyword>
<keyword id="KW-0804">Transcription</keyword>
<keyword id="KW-0805">Transcription regulation</keyword>
<keyword id="KW-0843">Virulence</keyword>
<comment type="function">
    <text evidence="1">Transcriptional regulator that controls expression of some virulence factors in a cell density-dependent manner.</text>
</comment>
<comment type="subcellular location">
    <subcellularLocation>
        <location evidence="1">Cytoplasm</location>
    </subcellularLocation>
</comment>
<comment type="similarity">
    <text evidence="3">Belongs to the SarA family.</text>
</comment>